<dbReference type="EC" id="6.1.1.17" evidence="1"/>
<dbReference type="EMBL" id="CP001019">
    <property type="protein sequence ID" value="ACJ17937.1"/>
    <property type="molecule type" value="Genomic_DNA"/>
</dbReference>
<dbReference type="RefSeq" id="WP_012569803.1">
    <property type="nucleotide sequence ID" value="NC_011527.1"/>
</dbReference>
<dbReference type="SMR" id="B6IZ09"/>
<dbReference type="KEGG" id="cbg:CbuG_0518"/>
<dbReference type="HOGENOM" id="CLU_015768_6_3_6"/>
<dbReference type="GO" id="GO:0005829">
    <property type="term" value="C:cytosol"/>
    <property type="evidence" value="ECO:0007669"/>
    <property type="project" value="TreeGrafter"/>
</dbReference>
<dbReference type="GO" id="GO:0005524">
    <property type="term" value="F:ATP binding"/>
    <property type="evidence" value="ECO:0007669"/>
    <property type="project" value="UniProtKB-UniRule"/>
</dbReference>
<dbReference type="GO" id="GO:0004818">
    <property type="term" value="F:glutamate-tRNA ligase activity"/>
    <property type="evidence" value="ECO:0007669"/>
    <property type="project" value="UniProtKB-UniRule"/>
</dbReference>
<dbReference type="GO" id="GO:0000049">
    <property type="term" value="F:tRNA binding"/>
    <property type="evidence" value="ECO:0007669"/>
    <property type="project" value="InterPro"/>
</dbReference>
<dbReference type="GO" id="GO:0008270">
    <property type="term" value="F:zinc ion binding"/>
    <property type="evidence" value="ECO:0007669"/>
    <property type="project" value="InterPro"/>
</dbReference>
<dbReference type="GO" id="GO:0006424">
    <property type="term" value="P:glutamyl-tRNA aminoacylation"/>
    <property type="evidence" value="ECO:0007669"/>
    <property type="project" value="UniProtKB-UniRule"/>
</dbReference>
<dbReference type="CDD" id="cd00808">
    <property type="entry name" value="GluRS_core"/>
    <property type="match status" value="1"/>
</dbReference>
<dbReference type="FunFam" id="3.40.50.620:FF:000007">
    <property type="entry name" value="Glutamate--tRNA ligase"/>
    <property type="match status" value="1"/>
</dbReference>
<dbReference type="Gene3D" id="1.10.10.350">
    <property type="match status" value="1"/>
</dbReference>
<dbReference type="Gene3D" id="3.40.50.620">
    <property type="entry name" value="HUPs"/>
    <property type="match status" value="1"/>
</dbReference>
<dbReference type="HAMAP" id="MF_00022">
    <property type="entry name" value="Glu_tRNA_synth_type1"/>
    <property type="match status" value="1"/>
</dbReference>
<dbReference type="InterPro" id="IPR045462">
    <property type="entry name" value="aa-tRNA-synth_I_cd-bd"/>
</dbReference>
<dbReference type="InterPro" id="IPR020751">
    <property type="entry name" value="aa-tRNA-synth_I_codon-bd_sub2"/>
</dbReference>
<dbReference type="InterPro" id="IPR001412">
    <property type="entry name" value="aa-tRNA-synth_I_CS"/>
</dbReference>
<dbReference type="InterPro" id="IPR008925">
    <property type="entry name" value="aa_tRNA-synth_I_cd-bd_sf"/>
</dbReference>
<dbReference type="InterPro" id="IPR004527">
    <property type="entry name" value="Glu-tRNA-ligase_bac/mito"/>
</dbReference>
<dbReference type="InterPro" id="IPR000924">
    <property type="entry name" value="Glu/Gln-tRNA-synth"/>
</dbReference>
<dbReference type="InterPro" id="IPR020058">
    <property type="entry name" value="Glu/Gln-tRNA-synth_Ib_cat-dom"/>
</dbReference>
<dbReference type="InterPro" id="IPR049940">
    <property type="entry name" value="GluQ/Sye"/>
</dbReference>
<dbReference type="InterPro" id="IPR033910">
    <property type="entry name" value="GluRS_core"/>
</dbReference>
<dbReference type="InterPro" id="IPR014729">
    <property type="entry name" value="Rossmann-like_a/b/a_fold"/>
</dbReference>
<dbReference type="NCBIfam" id="TIGR00464">
    <property type="entry name" value="gltX_bact"/>
    <property type="match status" value="1"/>
</dbReference>
<dbReference type="PANTHER" id="PTHR43311">
    <property type="entry name" value="GLUTAMATE--TRNA LIGASE"/>
    <property type="match status" value="1"/>
</dbReference>
<dbReference type="PANTHER" id="PTHR43311:SF2">
    <property type="entry name" value="GLUTAMATE--TRNA LIGASE, MITOCHONDRIAL-RELATED"/>
    <property type="match status" value="1"/>
</dbReference>
<dbReference type="Pfam" id="PF19269">
    <property type="entry name" value="Anticodon_2"/>
    <property type="match status" value="1"/>
</dbReference>
<dbReference type="Pfam" id="PF00749">
    <property type="entry name" value="tRNA-synt_1c"/>
    <property type="match status" value="1"/>
</dbReference>
<dbReference type="PRINTS" id="PR00987">
    <property type="entry name" value="TRNASYNTHGLU"/>
</dbReference>
<dbReference type="SUPFAM" id="SSF48163">
    <property type="entry name" value="An anticodon-binding domain of class I aminoacyl-tRNA synthetases"/>
    <property type="match status" value="1"/>
</dbReference>
<dbReference type="SUPFAM" id="SSF52374">
    <property type="entry name" value="Nucleotidylyl transferase"/>
    <property type="match status" value="1"/>
</dbReference>
<dbReference type="PROSITE" id="PS00178">
    <property type="entry name" value="AA_TRNA_LIGASE_I"/>
    <property type="match status" value="1"/>
</dbReference>
<protein>
    <recommendedName>
        <fullName evidence="1">Glutamate--tRNA ligase 1</fullName>
        <ecNumber evidence="1">6.1.1.17</ecNumber>
    </recommendedName>
    <alternativeName>
        <fullName evidence="1">Glutamyl-tRNA synthetase 1</fullName>
        <shortName evidence="1">GluRS 1</shortName>
    </alternativeName>
</protein>
<accession>B6IZ09</accession>
<evidence type="ECO:0000255" key="1">
    <source>
        <dbReference type="HAMAP-Rule" id="MF_00022"/>
    </source>
</evidence>
<comment type="function">
    <text evidence="1">Catalyzes the attachment of glutamate to tRNA(Glu) in a two-step reaction: glutamate is first activated by ATP to form Glu-AMP and then transferred to the acceptor end of tRNA(Glu).</text>
</comment>
<comment type="catalytic activity">
    <reaction evidence="1">
        <text>tRNA(Glu) + L-glutamate + ATP = L-glutamyl-tRNA(Glu) + AMP + diphosphate</text>
        <dbReference type="Rhea" id="RHEA:23540"/>
        <dbReference type="Rhea" id="RHEA-COMP:9663"/>
        <dbReference type="Rhea" id="RHEA-COMP:9680"/>
        <dbReference type="ChEBI" id="CHEBI:29985"/>
        <dbReference type="ChEBI" id="CHEBI:30616"/>
        <dbReference type="ChEBI" id="CHEBI:33019"/>
        <dbReference type="ChEBI" id="CHEBI:78442"/>
        <dbReference type="ChEBI" id="CHEBI:78520"/>
        <dbReference type="ChEBI" id="CHEBI:456215"/>
        <dbReference type="EC" id="6.1.1.17"/>
    </reaction>
</comment>
<comment type="subunit">
    <text evidence="1">Monomer.</text>
</comment>
<comment type="subcellular location">
    <subcellularLocation>
        <location evidence="1">Cytoplasm</location>
    </subcellularLocation>
</comment>
<comment type="similarity">
    <text evidence="1">Belongs to the class-I aminoacyl-tRNA synthetase family. Glutamate--tRNA ligase type 1 subfamily.</text>
</comment>
<gene>
    <name evidence="1" type="primary">gltX1</name>
    <name type="ordered locus">CbuG_0518</name>
</gene>
<name>SYE1_COXB2</name>
<proteinExistence type="inferred from homology"/>
<keyword id="KW-0030">Aminoacyl-tRNA synthetase</keyword>
<keyword id="KW-0067">ATP-binding</keyword>
<keyword id="KW-0963">Cytoplasm</keyword>
<keyword id="KW-0436">Ligase</keyword>
<keyword id="KW-0547">Nucleotide-binding</keyword>
<keyword id="KW-0648">Protein biosynthesis</keyword>
<organism>
    <name type="scientific">Coxiella burnetii (strain CbuG_Q212)</name>
    <name type="common">Coxiella burnetii (strain Q212)</name>
    <dbReference type="NCBI Taxonomy" id="434923"/>
    <lineage>
        <taxon>Bacteria</taxon>
        <taxon>Pseudomonadati</taxon>
        <taxon>Pseudomonadota</taxon>
        <taxon>Gammaproteobacteria</taxon>
        <taxon>Legionellales</taxon>
        <taxon>Coxiellaceae</taxon>
        <taxon>Coxiella</taxon>
    </lineage>
</organism>
<feature type="chain" id="PRO_0000367655" description="Glutamate--tRNA ligase 1">
    <location>
        <begin position="1"/>
        <end position="465"/>
    </location>
</feature>
<feature type="short sequence motif" description="'HIGH' region" evidence="1">
    <location>
        <begin position="8"/>
        <end position="18"/>
    </location>
</feature>
<feature type="short sequence motif" description="'KMSKS' region" evidence="1">
    <location>
        <begin position="249"/>
        <end position="253"/>
    </location>
</feature>
<feature type="binding site" evidence="1">
    <location>
        <position position="252"/>
    </location>
    <ligand>
        <name>ATP</name>
        <dbReference type="ChEBI" id="CHEBI:30616"/>
    </ligand>
</feature>
<sequence length="465" mass="52753">MMKSRFCPSPTGLMHLGNARTALFNYLFAKSKDGIFLLRIEDTDVERSKETFDLGLQEDLRWLNLEWQEGPGADEGNGPYHQSKRQAIYDDYYQRLEEADQAYPCFCSEEQLRLSRKIQRSAGKPPRYAGTCRSLSAAEIEKKKAEGLQPALRFRVPDDEVVVFADLVRGEQRFQTNDIGDFIIRRANGTSPFMFCNAIDDALMGVSHVLRGEDHLTNTPRQLLILQALELPVPTYAHIALIVGPDGSPLSKRHGSRGIKELRDNGYLPLALTNYLARLGHYYASDELLSLAELAKGFNVESLSKSPAKFNAQQLDYWQKQTVNQLPNDDFWEWAGSELQSQIPTDKADLFLTTVKPNVSFPRDVAYWVNVCFGKTFNLETAQSELLRATGNRYFEEAFEAFKKFGKDLNSVVSHLKEKLNLKGKPLYQPLRIALTGAEHGPELAKLILIMDYETIQNRLQEACQ</sequence>
<reference key="1">
    <citation type="journal article" date="2009" name="Infect. Immun.">
        <title>Comparative genomics reveal extensive transposon-mediated genomic plasticity and diversity among potential effector proteins within the genus Coxiella.</title>
        <authorList>
            <person name="Beare P.A."/>
            <person name="Unsworth N."/>
            <person name="Andoh M."/>
            <person name="Voth D.E."/>
            <person name="Omsland A."/>
            <person name="Gilk S.D."/>
            <person name="Williams K.P."/>
            <person name="Sobral B.W."/>
            <person name="Kupko J.J. III"/>
            <person name="Porcella S.F."/>
            <person name="Samuel J.E."/>
            <person name="Heinzen R.A."/>
        </authorList>
    </citation>
    <scope>NUCLEOTIDE SEQUENCE [LARGE SCALE GENOMIC DNA]</scope>
    <source>
        <strain>CbuG_Q212</strain>
    </source>
</reference>